<proteinExistence type="inferred from homology"/>
<organism>
    <name type="scientific">Acidiphilium cryptum (strain JF-5)</name>
    <dbReference type="NCBI Taxonomy" id="349163"/>
    <lineage>
        <taxon>Bacteria</taxon>
        <taxon>Pseudomonadati</taxon>
        <taxon>Pseudomonadota</taxon>
        <taxon>Alphaproteobacteria</taxon>
        <taxon>Acetobacterales</taxon>
        <taxon>Acidocellaceae</taxon>
        <taxon>Acidiphilium</taxon>
    </lineage>
</organism>
<protein>
    <recommendedName>
        <fullName evidence="1">Small ribosomal subunit protein uS7</fullName>
    </recommendedName>
    <alternativeName>
        <fullName evidence="2">30S ribosomal protein S7</fullName>
    </alternativeName>
</protein>
<evidence type="ECO:0000255" key="1">
    <source>
        <dbReference type="HAMAP-Rule" id="MF_00480"/>
    </source>
</evidence>
<evidence type="ECO:0000305" key="2"/>
<gene>
    <name evidence="1" type="primary">rpsG</name>
    <name type="ordered locus">Acry_1949</name>
</gene>
<sequence>MSRRHSAVKREVLPDPKFGDVVISRFMNVLMYDGKKSVAESIVYGALDSLKKRGGQNADPVRLFHEALDNVKPAIEVRSRRVGGATYQVPVEVRSERRQALAIRWIIESARKRGEHTMEDRLSNELLDAVNNRGAAVKKREDTHRMAEANKAFSHYRW</sequence>
<feature type="chain" id="PRO_1000014135" description="Small ribosomal subunit protein uS7">
    <location>
        <begin position="1"/>
        <end position="158"/>
    </location>
</feature>
<name>RS7_ACICJ</name>
<dbReference type="EMBL" id="CP000697">
    <property type="protein sequence ID" value="ABQ31150.1"/>
    <property type="molecule type" value="Genomic_DNA"/>
</dbReference>
<dbReference type="RefSeq" id="WP_007424170.1">
    <property type="nucleotide sequence ID" value="NC_009484.1"/>
</dbReference>
<dbReference type="SMR" id="A5FZW8"/>
<dbReference type="STRING" id="349163.Acry_1949"/>
<dbReference type="KEGG" id="acr:Acry_1949"/>
<dbReference type="eggNOG" id="COG0049">
    <property type="taxonomic scope" value="Bacteria"/>
</dbReference>
<dbReference type="HOGENOM" id="CLU_072226_1_1_5"/>
<dbReference type="Proteomes" id="UP000000245">
    <property type="component" value="Chromosome"/>
</dbReference>
<dbReference type="GO" id="GO:0015935">
    <property type="term" value="C:small ribosomal subunit"/>
    <property type="evidence" value="ECO:0007669"/>
    <property type="project" value="InterPro"/>
</dbReference>
<dbReference type="GO" id="GO:0019843">
    <property type="term" value="F:rRNA binding"/>
    <property type="evidence" value="ECO:0007669"/>
    <property type="project" value="UniProtKB-UniRule"/>
</dbReference>
<dbReference type="GO" id="GO:0003735">
    <property type="term" value="F:structural constituent of ribosome"/>
    <property type="evidence" value="ECO:0007669"/>
    <property type="project" value="InterPro"/>
</dbReference>
<dbReference type="GO" id="GO:0000049">
    <property type="term" value="F:tRNA binding"/>
    <property type="evidence" value="ECO:0007669"/>
    <property type="project" value="UniProtKB-UniRule"/>
</dbReference>
<dbReference type="GO" id="GO:0006412">
    <property type="term" value="P:translation"/>
    <property type="evidence" value="ECO:0007669"/>
    <property type="project" value="UniProtKB-UniRule"/>
</dbReference>
<dbReference type="CDD" id="cd14869">
    <property type="entry name" value="uS7_Bacteria"/>
    <property type="match status" value="1"/>
</dbReference>
<dbReference type="FunFam" id="1.10.455.10:FF:000001">
    <property type="entry name" value="30S ribosomal protein S7"/>
    <property type="match status" value="1"/>
</dbReference>
<dbReference type="Gene3D" id="1.10.455.10">
    <property type="entry name" value="Ribosomal protein S7 domain"/>
    <property type="match status" value="1"/>
</dbReference>
<dbReference type="HAMAP" id="MF_00480_B">
    <property type="entry name" value="Ribosomal_uS7_B"/>
    <property type="match status" value="1"/>
</dbReference>
<dbReference type="InterPro" id="IPR000235">
    <property type="entry name" value="Ribosomal_uS7"/>
</dbReference>
<dbReference type="InterPro" id="IPR005717">
    <property type="entry name" value="Ribosomal_uS7_bac/org-type"/>
</dbReference>
<dbReference type="InterPro" id="IPR020606">
    <property type="entry name" value="Ribosomal_uS7_CS"/>
</dbReference>
<dbReference type="InterPro" id="IPR023798">
    <property type="entry name" value="Ribosomal_uS7_dom"/>
</dbReference>
<dbReference type="InterPro" id="IPR036823">
    <property type="entry name" value="Ribosomal_uS7_dom_sf"/>
</dbReference>
<dbReference type="NCBIfam" id="TIGR01029">
    <property type="entry name" value="rpsG_bact"/>
    <property type="match status" value="1"/>
</dbReference>
<dbReference type="PANTHER" id="PTHR11205">
    <property type="entry name" value="RIBOSOMAL PROTEIN S7"/>
    <property type="match status" value="1"/>
</dbReference>
<dbReference type="Pfam" id="PF00177">
    <property type="entry name" value="Ribosomal_S7"/>
    <property type="match status" value="1"/>
</dbReference>
<dbReference type="PIRSF" id="PIRSF002122">
    <property type="entry name" value="RPS7p_RPS7a_RPS5e_RPS7o"/>
    <property type="match status" value="1"/>
</dbReference>
<dbReference type="SUPFAM" id="SSF47973">
    <property type="entry name" value="Ribosomal protein S7"/>
    <property type="match status" value="1"/>
</dbReference>
<dbReference type="PROSITE" id="PS00052">
    <property type="entry name" value="RIBOSOMAL_S7"/>
    <property type="match status" value="1"/>
</dbReference>
<comment type="function">
    <text evidence="1">One of the primary rRNA binding proteins, it binds directly to 16S rRNA where it nucleates assembly of the head domain of the 30S subunit. Is located at the subunit interface close to the decoding center, probably blocks exit of the E-site tRNA.</text>
</comment>
<comment type="subunit">
    <text evidence="1">Part of the 30S ribosomal subunit. Contacts proteins S9 and S11.</text>
</comment>
<comment type="similarity">
    <text evidence="1">Belongs to the universal ribosomal protein uS7 family.</text>
</comment>
<keyword id="KW-1185">Reference proteome</keyword>
<keyword id="KW-0687">Ribonucleoprotein</keyword>
<keyword id="KW-0689">Ribosomal protein</keyword>
<keyword id="KW-0694">RNA-binding</keyword>
<keyword id="KW-0699">rRNA-binding</keyword>
<keyword id="KW-0820">tRNA-binding</keyword>
<reference key="1">
    <citation type="submission" date="2007-05" db="EMBL/GenBank/DDBJ databases">
        <title>Complete sequence of chromosome of Acidiphilium cryptum JF-5.</title>
        <authorList>
            <consortium name="US DOE Joint Genome Institute"/>
            <person name="Copeland A."/>
            <person name="Lucas S."/>
            <person name="Lapidus A."/>
            <person name="Barry K."/>
            <person name="Detter J.C."/>
            <person name="Glavina del Rio T."/>
            <person name="Hammon N."/>
            <person name="Israni S."/>
            <person name="Dalin E."/>
            <person name="Tice H."/>
            <person name="Pitluck S."/>
            <person name="Sims D."/>
            <person name="Brettin T."/>
            <person name="Bruce D."/>
            <person name="Han C."/>
            <person name="Schmutz J."/>
            <person name="Larimer F."/>
            <person name="Land M."/>
            <person name="Hauser L."/>
            <person name="Kyrpides N."/>
            <person name="Kim E."/>
            <person name="Magnuson T."/>
            <person name="Richardson P."/>
        </authorList>
    </citation>
    <scope>NUCLEOTIDE SEQUENCE [LARGE SCALE GENOMIC DNA]</scope>
    <source>
        <strain>JF-5</strain>
    </source>
</reference>
<accession>A5FZW8</accession>